<feature type="chain" id="PRO_1000006032" description="DNA-directed RNA polymerase subunit omega">
    <location>
        <begin position="1"/>
        <end position="75"/>
    </location>
</feature>
<keyword id="KW-0240">DNA-directed RNA polymerase</keyword>
<keyword id="KW-0548">Nucleotidyltransferase</keyword>
<keyword id="KW-1185">Reference proteome</keyword>
<keyword id="KW-0804">Transcription</keyword>
<keyword id="KW-0808">Transferase</keyword>
<sequence>MISAGVDSKDLAKRGESLIRQSTNRYLTTVKIAFRAKQRRFDDFDGLLEESSVKPVHRAIVELSDEQDQPDLLPG</sequence>
<comment type="function">
    <text evidence="1">Promotes RNA polymerase assembly. Latches the N- and C-terminal regions of the beta' subunit thereby facilitating its interaction with the beta and alpha subunits.</text>
</comment>
<comment type="catalytic activity">
    <reaction evidence="1">
        <text>RNA(n) + a ribonucleoside 5'-triphosphate = RNA(n+1) + diphosphate</text>
        <dbReference type="Rhea" id="RHEA:21248"/>
        <dbReference type="Rhea" id="RHEA-COMP:14527"/>
        <dbReference type="Rhea" id="RHEA-COMP:17342"/>
        <dbReference type="ChEBI" id="CHEBI:33019"/>
        <dbReference type="ChEBI" id="CHEBI:61557"/>
        <dbReference type="ChEBI" id="CHEBI:140395"/>
        <dbReference type="EC" id="2.7.7.6"/>
    </reaction>
</comment>
<comment type="subunit">
    <text evidence="1">In cyanobacteria the RNAP catalytic core is composed of 2 alpha, 1 beta, 1 beta', 1 gamma and 1 omega subunit. When a sigma factor is associated with the core the holoenzyme is formed, which can initiate transcription.</text>
</comment>
<comment type="similarity">
    <text evidence="1">Belongs to the RNA polymerase subunit omega family.</text>
</comment>
<proteinExistence type="inferred from homology"/>
<gene>
    <name evidence="1" type="primary">rpoZ</name>
    <name type="ordered locus">sync_2269</name>
</gene>
<reference key="1">
    <citation type="journal article" date="2006" name="Proc. Natl. Acad. Sci. U.S.A.">
        <title>Genome sequence of Synechococcus CC9311: insights into adaptation to a coastal environment.</title>
        <authorList>
            <person name="Palenik B."/>
            <person name="Ren Q."/>
            <person name="Dupont C.L."/>
            <person name="Myers G.S."/>
            <person name="Heidelberg J.F."/>
            <person name="Badger J.H."/>
            <person name="Madupu R."/>
            <person name="Nelson W.C."/>
            <person name="Brinkac L.M."/>
            <person name="Dodson R.J."/>
            <person name="Durkin A.S."/>
            <person name="Daugherty S.C."/>
            <person name="Sullivan S.A."/>
            <person name="Khouri H."/>
            <person name="Mohamoud Y."/>
            <person name="Halpin R."/>
            <person name="Paulsen I.T."/>
        </authorList>
    </citation>
    <scope>NUCLEOTIDE SEQUENCE [LARGE SCALE GENOMIC DNA]</scope>
    <source>
        <strain>CC9311</strain>
    </source>
</reference>
<name>RPOZ_SYNS3</name>
<organism>
    <name type="scientific">Synechococcus sp. (strain CC9311)</name>
    <dbReference type="NCBI Taxonomy" id="64471"/>
    <lineage>
        <taxon>Bacteria</taxon>
        <taxon>Bacillati</taxon>
        <taxon>Cyanobacteriota</taxon>
        <taxon>Cyanophyceae</taxon>
        <taxon>Synechococcales</taxon>
        <taxon>Synechococcaceae</taxon>
        <taxon>Synechococcus</taxon>
    </lineage>
</organism>
<protein>
    <recommendedName>
        <fullName evidence="1">DNA-directed RNA polymerase subunit omega</fullName>
        <shortName evidence="1">RNAP omega subunit</shortName>
        <ecNumber evidence="1">2.7.7.6</ecNumber>
    </recommendedName>
    <alternativeName>
        <fullName evidence="1">RNA polymerase omega subunit</fullName>
    </alternativeName>
    <alternativeName>
        <fullName evidence="1">Transcriptase subunit omega</fullName>
    </alternativeName>
</protein>
<dbReference type="EC" id="2.7.7.6" evidence="1"/>
<dbReference type="EMBL" id="CP000435">
    <property type="protein sequence ID" value="ABI47310.1"/>
    <property type="molecule type" value="Genomic_DNA"/>
</dbReference>
<dbReference type="RefSeq" id="WP_011620178.1">
    <property type="nucleotide sequence ID" value="NC_008319.1"/>
</dbReference>
<dbReference type="SMR" id="Q0I7V6"/>
<dbReference type="STRING" id="64471.sync_2269"/>
<dbReference type="KEGG" id="syg:sync_2269"/>
<dbReference type="eggNOG" id="ENOG5032RMS">
    <property type="taxonomic scope" value="Bacteria"/>
</dbReference>
<dbReference type="HOGENOM" id="CLU_175526_0_0_3"/>
<dbReference type="OrthoDB" id="463386at2"/>
<dbReference type="Proteomes" id="UP000001961">
    <property type="component" value="Chromosome"/>
</dbReference>
<dbReference type="GO" id="GO:0000428">
    <property type="term" value="C:DNA-directed RNA polymerase complex"/>
    <property type="evidence" value="ECO:0007669"/>
    <property type="project" value="UniProtKB-KW"/>
</dbReference>
<dbReference type="GO" id="GO:0003677">
    <property type="term" value="F:DNA binding"/>
    <property type="evidence" value="ECO:0007669"/>
    <property type="project" value="UniProtKB-UniRule"/>
</dbReference>
<dbReference type="GO" id="GO:0003899">
    <property type="term" value="F:DNA-directed RNA polymerase activity"/>
    <property type="evidence" value="ECO:0007669"/>
    <property type="project" value="UniProtKB-UniRule"/>
</dbReference>
<dbReference type="GO" id="GO:0006351">
    <property type="term" value="P:DNA-templated transcription"/>
    <property type="evidence" value="ECO:0007669"/>
    <property type="project" value="UniProtKB-UniRule"/>
</dbReference>
<dbReference type="HAMAP" id="MF_00366">
    <property type="entry name" value="RNApol_bact_RpoZ"/>
    <property type="match status" value="1"/>
</dbReference>
<dbReference type="InterPro" id="IPR003716">
    <property type="entry name" value="DNA-dir_RNA_pol_omega"/>
</dbReference>
<dbReference type="InterPro" id="IPR006110">
    <property type="entry name" value="Pol_omega/Rpo6/RPB6"/>
</dbReference>
<dbReference type="NCBIfam" id="NF001574">
    <property type="entry name" value="PRK00392.2-5"/>
    <property type="match status" value="1"/>
</dbReference>
<dbReference type="Pfam" id="PF01192">
    <property type="entry name" value="RNA_pol_Rpb6"/>
    <property type="match status" value="1"/>
</dbReference>
<evidence type="ECO:0000255" key="1">
    <source>
        <dbReference type="HAMAP-Rule" id="MF_00366"/>
    </source>
</evidence>
<accession>Q0I7V6</accession>